<comment type="function">
    <text evidence="1 4">Component of the ribosome, a large ribonucleoprotein complex responsible for the synthesis of proteins in the cell. The small ribosomal subunit (SSU) binds messenger RNAs (mRNAs) and translates the encoded message by selecting cognate aminoacyl-transfer RNA (tRNA) molecules. The large subunit (LSU) contains the ribosomal catalytic site termed the peptidyl transferase center (PTC), which catalyzes the formation of peptide bonds, thereby polymerizing the amino acids delivered by tRNAs into a polypeptide chain. The nascent polypeptides leave the ribosome through a tunnel in the LSU and interact with protein factors that function in enzymatic processing, targeting, and the membrane insertion of nascent chains at the exit of the ribosomal tunnel.</text>
</comment>
<comment type="subunit">
    <text evidence="1 4">Component of the large ribosomal subunit (LSU). Mature yeast ribosomes consist of a small (40S) and a large (60S) subunit. The 40S small subunit contains 1 molecule of ribosomal RNA (18S rRNA) and at least 33 different proteins. The large 60S subunit contains 3 rRNA molecules (25S, 5.8S and 5S rRNA) and at least 46 different proteins.</text>
</comment>
<comment type="subcellular location">
    <subcellularLocation>
        <location evidence="2">Cytoplasm</location>
    </subcellularLocation>
</comment>
<comment type="similarity">
    <text evidence="4">Belongs to the eukaryotic ribosomal protein eL28 family.</text>
</comment>
<protein>
    <recommendedName>
        <fullName evidence="4">Large ribosomal subunit protein eL28</fullName>
    </recommendedName>
    <alternativeName>
        <fullName>Probable 60S ribosomal protein L28e</fullName>
    </alternativeName>
</protein>
<keyword id="KW-0002">3D-structure</keyword>
<keyword id="KW-0963">Cytoplasm</keyword>
<keyword id="KW-0597">Phosphoprotein</keyword>
<keyword id="KW-1185">Reference proteome</keyword>
<keyword id="KW-0687">Ribonucleoprotein</keyword>
<keyword id="KW-0689">Ribosomal protein</keyword>
<dbReference type="EMBL" id="CU329670">
    <property type="protein sequence ID" value="CAA22600.1"/>
    <property type="molecule type" value="Genomic_DNA"/>
</dbReference>
<dbReference type="EMBL" id="AB016007">
    <property type="protein sequence ID" value="BAA31554.1"/>
    <property type="molecule type" value="mRNA"/>
</dbReference>
<dbReference type="PIR" id="T37749">
    <property type="entry name" value="T37749"/>
</dbReference>
<dbReference type="PIR" id="T43380">
    <property type="entry name" value="T43380"/>
</dbReference>
<dbReference type="RefSeq" id="NP_593124.1">
    <property type="nucleotide sequence ID" value="NM_001018520.2"/>
</dbReference>
<dbReference type="PDB" id="9AXT">
    <property type="method" value="EM"/>
    <property type="resolution" value="2.40 A"/>
    <property type="chains" value="By=1-134"/>
</dbReference>
<dbReference type="PDB" id="9AXU">
    <property type="method" value="EM"/>
    <property type="resolution" value="1.94 A"/>
    <property type="chains" value="y=1-134"/>
</dbReference>
<dbReference type="PDB" id="9AXV">
    <property type="method" value="EM"/>
    <property type="resolution" value="2.40 A"/>
    <property type="chains" value="By=1-134"/>
</dbReference>
<dbReference type="PDBsum" id="9AXT"/>
<dbReference type="PDBsum" id="9AXU"/>
<dbReference type="PDBsum" id="9AXV"/>
<dbReference type="EMDB" id="EMD-43972"/>
<dbReference type="EMDB" id="EMD-43973"/>
<dbReference type="EMDB" id="EMD-43976"/>
<dbReference type="SMR" id="O14069"/>
<dbReference type="BioGRID" id="279231">
    <property type="interactions" value="15"/>
</dbReference>
<dbReference type="FunCoup" id="O14069">
    <property type="interactions" value="503"/>
</dbReference>
<dbReference type="IntAct" id="O14069">
    <property type="interactions" value="2"/>
</dbReference>
<dbReference type="STRING" id="284812.O14069"/>
<dbReference type="iPTMnet" id="O14069"/>
<dbReference type="PaxDb" id="4896-SPAC1687.06c.1"/>
<dbReference type="EnsemblFungi" id="SPAC1687.06c.1">
    <property type="protein sequence ID" value="SPAC1687.06c.1:pep"/>
    <property type="gene ID" value="SPAC1687.06c"/>
</dbReference>
<dbReference type="GeneID" id="2542782"/>
<dbReference type="KEGG" id="spo:2542782"/>
<dbReference type="PomBase" id="SPAC1687.06c">
    <property type="gene designation" value="rpl44"/>
</dbReference>
<dbReference type="VEuPathDB" id="FungiDB:SPAC1687.06c"/>
<dbReference type="eggNOG" id="KOG3412">
    <property type="taxonomic scope" value="Eukaryota"/>
</dbReference>
<dbReference type="HOGENOM" id="CLU_106801_0_0_1"/>
<dbReference type="InParanoid" id="O14069"/>
<dbReference type="OMA" id="FGGIQFN"/>
<dbReference type="PhylomeDB" id="O14069"/>
<dbReference type="Reactome" id="R-SPO-156827">
    <property type="pathway name" value="L13a-mediated translational silencing of Ceruloplasmin expression"/>
</dbReference>
<dbReference type="Reactome" id="R-SPO-1799339">
    <property type="pathway name" value="SRP-dependent cotranslational protein targeting to membrane"/>
</dbReference>
<dbReference type="Reactome" id="R-SPO-72689">
    <property type="pathway name" value="Formation of a pool of free 40S subunits"/>
</dbReference>
<dbReference type="Reactome" id="R-SPO-72706">
    <property type="pathway name" value="GTP hydrolysis and joining of the 60S ribosomal subunit"/>
</dbReference>
<dbReference type="Reactome" id="R-SPO-975956">
    <property type="pathway name" value="Nonsense Mediated Decay (NMD) independent of the Exon Junction Complex (EJC)"/>
</dbReference>
<dbReference type="Reactome" id="R-SPO-975957">
    <property type="pathway name" value="Nonsense Mediated Decay (NMD) enhanced by the Exon Junction Complex (EJC)"/>
</dbReference>
<dbReference type="PRO" id="PR:O14069"/>
<dbReference type="Proteomes" id="UP000002485">
    <property type="component" value="Chromosome I"/>
</dbReference>
<dbReference type="GO" id="GO:0005829">
    <property type="term" value="C:cytosol"/>
    <property type="evidence" value="ECO:0007005"/>
    <property type="project" value="PomBase"/>
</dbReference>
<dbReference type="GO" id="GO:0022625">
    <property type="term" value="C:cytosolic large ribosomal subunit"/>
    <property type="evidence" value="ECO:0000269"/>
    <property type="project" value="PomBase"/>
</dbReference>
<dbReference type="GO" id="GO:0003735">
    <property type="term" value="F:structural constituent of ribosome"/>
    <property type="evidence" value="ECO:0000250"/>
    <property type="project" value="PomBase"/>
</dbReference>
<dbReference type="GO" id="GO:0002181">
    <property type="term" value="P:cytoplasmic translation"/>
    <property type="evidence" value="ECO:0000250"/>
    <property type="project" value="PomBase"/>
</dbReference>
<dbReference type="FunFam" id="3.30.390.110:FF:000002">
    <property type="entry name" value="60S ribosomal protein L28"/>
    <property type="match status" value="1"/>
</dbReference>
<dbReference type="Gene3D" id="3.30.390.110">
    <property type="match status" value="1"/>
</dbReference>
<dbReference type="InterPro" id="IPR002672">
    <property type="entry name" value="Ribosomal_eL28"/>
</dbReference>
<dbReference type="InterPro" id="IPR029004">
    <property type="entry name" value="Ribosomal_eL28/Mak16"/>
</dbReference>
<dbReference type="PANTHER" id="PTHR10544">
    <property type="entry name" value="60S RIBOSOMAL PROTEIN L28"/>
    <property type="match status" value="1"/>
</dbReference>
<dbReference type="Pfam" id="PF01778">
    <property type="entry name" value="Ribosomal_L28e"/>
    <property type="match status" value="1"/>
</dbReference>
<evidence type="ECO:0000250" key="1">
    <source>
        <dbReference type="UniProtKB" id="P46779"/>
    </source>
</evidence>
<evidence type="ECO:0000269" key="2">
    <source>
    </source>
</evidence>
<evidence type="ECO:0000269" key="3">
    <source>
    </source>
</evidence>
<evidence type="ECO:0000305" key="4"/>
<sequence>MSVSNDLIWQVIRDNNRFLVKRPEFGGIQFNREPVNVSGKNAQRFSGLCNDKAVGVQANSPRGVVLITKTNPKNAQKPAKLFRKDVIANASSRKTYKSIAGRIGRTGYRDDLVKVSVARASAILSSQRPKKTVA</sequence>
<proteinExistence type="evidence at protein level"/>
<organism>
    <name type="scientific">Schizosaccharomyces pombe (strain 972 / ATCC 24843)</name>
    <name type="common">Fission yeast</name>
    <dbReference type="NCBI Taxonomy" id="284812"/>
    <lineage>
        <taxon>Eukaryota</taxon>
        <taxon>Fungi</taxon>
        <taxon>Dikarya</taxon>
        <taxon>Ascomycota</taxon>
        <taxon>Taphrinomycotina</taxon>
        <taxon>Schizosaccharomycetes</taxon>
        <taxon>Schizosaccharomycetales</taxon>
        <taxon>Schizosaccharomycetaceae</taxon>
        <taxon>Schizosaccharomyces</taxon>
    </lineage>
</organism>
<feature type="chain" id="PRO_0000122398" description="Large ribosomal subunit protein eL28">
    <location>
        <begin position="1"/>
        <end position="134"/>
    </location>
</feature>
<feature type="modified residue" description="Phosphoserine" evidence="3">
    <location>
        <position position="60"/>
    </location>
</feature>
<name>RL28_SCHPO</name>
<accession>O14069</accession>
<gene>
    <name type="primary">rpl44</name>
    <name type="synonym">rpl28</name>
    <name type="synonym">rpl28e</name>
    <name type="ORF">SPAC1687.06c</name>
</gene>
<reference key="1">
    <citation type="journal article" date="2002" name="Nature">
        <title>The genome sequence of Schizosaccharomyces pombe.</title>
        <authorList>
            <person name="Wood V."/>
            <person name="Gwilliam R."/>
            <person name="Rajandream M.A."/>
            <person name="Lyne M.H."/>
            <person name="Lyne R."/>
            <person name="Stewart A."/>
            <person name="Sgouros J.G."/>
            <person name="Peat N."/>
            <person name="Hayles J."/>
            <person name="Baker S.G."/>
            <person name="Basham D."/>
            <person name="Bowman S."/>
            <person name="Brooks K."/>
            <person name="Brown D."/>
            <person name="Brown S."/>
            <person name="Chillingworth T."/>
            <person name="Churcher C.M."/>
            <person name="Collins M."/>
            <person name="Connor R."/>
            <person name="Cronin A."/>
            <person name="Davis P."/>
            <person name="Feltwell T."/>
            <person name="Fraser A."/>
            <person name="Gentles S."/>
            <person name="Goble A."/>
            <person name="Hamlin N."/>
            <person name="Harris D.E."/>
            <person name="Hidalgo J."/>
            <person name="Hodgson G."/>
            <person name="Holroyd S."/>
            <person name="Hornsby T."/>
            <person name="Howarth S."/>
            <person name="Huckle E.J."/>
            <person name="Hunt S."/>
            <person name="Jagels K."/>
            <person name="James K.D."/>
            <person name="Jones L."/>
            <person name="Jones M."/>
            <person name="Leather S."/>
            <person name="McDonald S."/>
            <person name="McLean J."/>
            <person name="Mooney P."/>
            <person name="Moule S."/>
            <person name="Mungall K.L."/>
            <person name="Murphy L.D."/>
            <person name="Niblett D."/>
            <person name="Odell C."/>
            <person name="Oliver K."/>
            <person name="O'Neil S."/>
            <person name="Pearson D."/>
            <person name="Quail M.A."/>
            <person name="Rabbinowitsch E."/>
            <person name="Rutherford K.M."/>
            <person name="Rutter S."/>
            <person name="Saunders D."/>
            <person name="Seeger K."/>
            <person name="Sharp S."/>
            <person name="Skelton J."/>
            <person name="Simmonds M.N."/>
            <person name="Squares R."/>
            <person name="Squares S."/>
            <person name="Stevens K."/>
            <person name="Taylor K."/>
            <person name="Taylor R.G."/>
            <person name="Tivey A."/>
            <person name="Walsh S.V."/>
            <person name="Warren T."/>
            <person name="Whitehead S."/>
            <person name="Woodward J.R."/>
            <person name="Volckaert G."/>
            <person name="Aert R."/>
            <person name="Robben J."/>
            <person name="Grymonprez B."/>
            <person name="Weltjens I."/>
            <person name="Vanstreels E."/>
            <person name="Rieger M."/>
            <person name="Schaefer M."/>
            <person name="Mueller-Auer S."/>
            <person name="Gabel C."/>
            <person name="Fuchs M."/>
            <person name="Duesterhoeft A."/>
            <person name="Fritzc C."/>
            <person name="Holzer E."/>
            <person name="Moestl D."/>
            <person name="Hilbert H."/>
            <person name="Borzym K."/>
            <person name="Langer I."/>
            <person name="Beck A."/>
            <person name="Lehrach H."/>
            <person name="Reinhardt R."/>
            <person name="Pohl T.M."/>
            <person name="Eger P."/>
            <person name="Zimmermann W."/>
            <person name="Wedler H."/>
            <person name="Wambutt R."/>
            <person name="Purnelle B."/>
            <person name="Goffeau A."/>
            <person name="Cadieu E."/>
            <person name="Dreano S."/>
            <person name="Gloux S."/>
            <person name="Lelaure V."/>
            <person name="Mottier S."/>
            <person name="Galibert F."/>
            <person name="Aves S.J."/>
            <person name="Xiang Z."/>
            <person name="Hunt C."/>
            <person name="Moore K."/>
            <person name="Hurst S.M."/>
            <person name="Lucas M."/>
            <person name="Rochet M."/>
            <person name="Gaillardin C."/>
            <person name="Tallada V.A."/>
            <person name="Garzon A."/>
            <person name="Thode G."/>
            <person name="Daga R.R."/>
            <person name="Cruzado L."/>
            <person name="Jimenez J."/>
            <person name="Sanchez M."/>
            <person name="del Rey F."/>
            <person name="Benito J."/>
            <person name="Dominguez A."/>
            <person name="Revuelta J.L."/>
            <person name="Moreno S."/>
            <person name="Armstrong J."/>
            <person name="Forsburg S.L."/>
            <person name="Cerutti L."/>
            <person name="Lowe T."/>
            <person name="McCombie W.R."/>
            <person name="Paulsen I."/>
            <person name="Potashkin J."/>
            <person name="Shpakovski G.V."/>
            <person name="Ussery D."/>
            <person name="Barrell B.G."/>
            <person name="Nurse P."/>
        </authorList>
    </citation>
    <scope>NUCLEOTIDE SEQUENCE [LARGE SCALE GENOMIC DNA]</scope>
    <source>
        <strain>972 / ATCC 24843</strain>
    </source>
</reference>
<reference key="2">
    <citation type="submission" date="1998-07" db="EMBL/GenBank/DDBJ databases">
        <title>S.pombe ribosomal protein L28.</title>
        <authorList>
            <person name="Kawamukai M."/>
        </authorList>
    </citation>
    <scope>NUCLEOTIDE SEQUENCE [MRNA] OF 12-134</scope>
</reference>
<reference key="3">
    <citation type="journal article" date="2006" name="Nat. Biotechnol.">
        <title>ORFeome cloning and global analysis of protein localization in the fission yeast Schizosaccharomyces pombe.</title>
        <authorList>
            <person name="Matsuyama A."/>
            <person name="Arai R."/>
            <person name="Yashiroda Y."/>
            <person name="Shirai A."/>
            <person name="Kamata A."/>
            <person name="Sekido S."/>
            <person name="Kobayashi Y."/>
            <person name="Hashimoto A."/>
            <person name="Hamamoto M."/>
            <person name="Hiraoka Y."/>
            <person name="Horinouchi S."/>
            <person name="Yoshida M."/>
        </authorList>
    </citation>
    <scope>SUBCELLULAR LOCATION [LARGE SCALE ANALYSIS]</scope>
</reference>
<reference key="4">
    <citation type="journal article" date="2008" name="J. Proteome Res.">
        <title>Phosphoproteome analysis of fission yeast.</title>
        <authorList>
            <person name="Wilson-Grady J.T."/>
            <person name="Villen J."/>
            <person name="Gygi S.P."/>
        </authorList>
    </citation>
    <scope>PHOSPHORYLATION [LARGE SCALE ANALYSIS] AT SER-60</scope>
    <scope>IDENTIFICATION BY MASS SPECTROMETRY</scope>
</reference>